<dbReference type="EMBL" id="BX572602">
    <property type="protein sequence ID" value="CAE28363.1"/>
    <property type="molecule type" value="Genomic_DNA"/>
</dbReference>
<dbReference type="RefSeq" id="WP_011158471.1">
    <property type="nucleotide sequence ID" value="NZ_CP116810.1"/>
</dbReference>
<dbReference type="SMR" id="Q6N5Q2"/>
<dbReference type="IntAct" id="Q6N5Q2">
    <property type="interactions" value="1"/>
</dbReference>
<dbReference type="STRING" id="258594.RPA2922"/>
<dbReference type="GeneID" id="66894004"/>
<dbReference type="eggNOG" id="COG0052">
    <property type="taxonomic scope" value="Bacteria"/>
</dbReference>
<dbReference type="HOGENOM" id="CLU_040318_2_1_5"/>
<dbReference type="PhylomeDB" id="Q6N5Q2"/>
<dbReference type="GO" id="GO:0022627">
    <property type="term" value="C:cytosolic small ribosomal subunit"/>
    <property type="evidence" value="ECO:0007669"/>
    <property type="project" value="TreeGrafter"/>
</dbReference>
<dbReference type="GO" id="GO:0003735">
    <property type="term" value="F:structural constituent of ribosome"/>
    <property type="evidence" value="ECO:0007669"/>
    <property type="project" value="InterPro"/>
</dbReference>
<dbReference type="GO" id="GO:0006412">
    <property type="term" value="P:translation"/>
    <property type="evidence" value="ECO:0007669"/>
    <property type="project" value="UniProtKB-UniRule"/>
</dbReference>
<dbReference type="CDD" id="cd01425">
    <property type="entry name" value="RPS2"/>
    <property type="match status" value="1"/>
</dbReference>
<dbReference type="Gene3D" id="3.40.50.10490">
    <property type="entry name" value="Glucose-6-phosphate isomerase like protein, domain 1"/>
    <property type="match status" value="1"/>
</dbReference>
<dbReference type="Gene3D" id="1.10.287.610">
    <property type="entry name" value="Helix hairpin bin"/>
    <property type="match status" value="1"/>
</dbReference>
<dbReference type="HAMAP" id="MF_00291_B">
    <property type="entry name" value="Ribosomal_uS2_B"/>
    <property type="match status" value="1"/>
</dbReference>
<dbReference type="InterPro" id="IPR001865">
    <property type="entry name" value="Ribosomal_uS2"/>
</dbReference>
<dbReference type="InterPro" id="IPR005706">
    <property type="entry name" value="Ribosomal_uS2_bac/mit/plastid"/>
</dbReference>
<dbReference type="InterPro" id="IPR018130">
    <property type="entry name" value="Ribosomal_uS2_CS"/>
</dbReference>
<dbReference type="InterPro" id="IPR023591">
    <property type="entry name" value="Ribosomal_uS2_flav_dom_sf"/>
</dbReference>
<dbReference type="NCBIfam" id="NF008966">
    <property type="entry name" value="PRK12311.1"/>
    <property type="match status" value="1"/>
</dbReference>
<dbReference type="NCBIfam" id="TIGR01011">
    <property type="entry name" value="rpsB_bact"/>
    <property type="match status" value="1"/>
</dbReference>
<dbReference type="PANTHER" id="PTHR12534">
    <property type="entry name" value="30S RIBOSOMAL PROTEIN S2 PROKARYOTIC AND ORGANELLAR"/>
    <property type="match status" value="1"/>
</dbReference>
<dbReference type="PANTHER" id="PTHR12534:SF0">
    <property type="entry name" value="SMALL RIBOSOMAL SUBUNIT PROTEIN US2M"/>
    <property type="match status" value="1"/>
</dbReference>
<dbReference type="Pfam" id="PF00318">
    <property type="entry name" value="Ribosomal_S2"/>
    <property type="match status" value="1"/>
</dbReference>
<dbReference type="PRINTS" id="PR00395">
    <property type="entry name" value="RIBOSOMALS2"/>
</dbReference>
<dbReference type="SUPFAM" id="SSF52313">
    <property type="entry name" value="Ribosomal protein S2"/>
    <property type="match status" value="1"/>
</dbReference>
<dbReference type="PROSITE" id="PS00962">
    <property type="entry name" value="RIBOSOMAL_S2_1"/>
    <property type="match status" value="1"/>
</dbReference>
<dbReference type="PROSITE" id="PS00963">
    <property type="entry name" value="RIBOSOMAL_S2_2"/>
    <property type="match status" value="1"/>
</dbReference>
<proteinExistence type="evidence at protein level"/>
<sequence length="331" mass="36044">MSLPEFSMRQLLEAGVHFGHQSHRWNPKMADYIFGVRNNIHIVDLTQTVPLLHRALQAISDTVAKGGRVLFVGTKRQAQDAVADAAKRSAQYFVNSRWLGGTLTNWKTISGSIRRLRHLEDVLSSADANAYTKKERLELQRERDKLNRSLGGIKDMGGLPDLIFVIDTNKEDIAIQEAQRLGIPVAAIVDTNCDPKGITYLVPGNDDAGRAIALYCDLVARAVIDGISRAQGDVGIDIGAAAQPLREDLPAAQATTFQGLPGPRGTPDDLKKLPGVSGAIEKKFNDLGIFHFWQLAELDQATAHQIGEELGLPSRADAWVAQAKSLTAEAE</sequence>
<gene>
    <name evidence="1" type="primary">rpsB</name>
    <name type="ordered locus">RPA2922</name>
</gene>
<reference key="1">
    <citation type="journal article" date="2004" name="Nat. Biotechnol.">
        <title>Complete genome sequence of the metabolically versatile photosynthetic bacterium Rhodopseudomonas palustris.</title>
        <authorList>
            <person name="Larimer F.W."/>
            <person name="Chain P."/>
            <person name="Hauser L."/>
            <person name="Lamerdin J.E."/>
            <person name="Malfatti S."/>
            <person name="Do L."/>
            <person name="Land M.L."/>
            <person name="Pelletier D.A."/>
            <person name="Beatty J.T."/>
            <person name="Lang A.S."/>
            <person name="Tabita F.R."/>
            <person name="Gibson J.L."/>
            <person name="Hanson T.E."/>
            <person name="Bobst C."/>
            <person name="Torres y Torres J.L."/>
            <person name="Peres C."/>
            <person name="Harrison F.H."/>
            <person name="Gibson J."/>
            <person name="Harwood C.S."/>
        </authorList>
    </citation>
    <scope>NUCLEOTIDE SEQUENCE [LARGE SCALE GENOMIC DNA]</scope>
    <source>
        <strain>ATCC BAA-98 / CGA009</strain>
    </source>
</reference>
<reference key="2">
    <citation type="journal article" date="2004" name="J. Proteome Res.">
        <title>Characterization of the 70S ribosome from Rhodopseudomonas palustris using an integrated 'top-down' and 'bottom-up' mass spectrometric approach.</title>
        <authorList>
            <person name="Strader M.B."/>
            <person name="VerBerkmoes N.C."/>
            <person name="Tabb D.L."/>
            <person name="Connelly H.M."/>
            <person name="Barton J.W."/>
            <person name="Bruce B.D."/>
            <person name="Pelletier D.A."/>
            <person name="Davison B.H."/>
            <person name="Hettich R.L."/>
            <person name="Larimer F.W."/>
            <person name="Hurst G.B."/>
        </authorList>
    </citation>
    <scope>PROTEIN SEQUENCE OF 284-315</scope>
    <source>
        <strain>ATCC BAA-98 / CGA009</strain>
    </source>
</reference>
<accession>Q6N5Q2</accession>
<name>RS2_RHOPA</name>
<feature type="chain" id="PRO_0000134226" description="Small ribosomal subunit protein uS2">
    <location>
        <begin position="1"/>
        <end position="331"/>
    </location>
</feature>
<organism>
    <name type="scientific">Rhodopseudomonas palustris (strain ATCC BAA-98 / CGA009)</name>
    <dbReference type="NCBI Taxonomy" id="258594"/>
    <lineage>
        <taxon>Bacteria</taxon>
        <taxon>Pseudomonadati</taxon>
        <taxon>Pseudomonadota</taxon>
        <taxon>Alphaproteobacteria</taxon>
        <taxon>Hyphomicrobiales</taxon>
        <taxon>Nitrobacteraceae</taxon>
        <taxon>Rhodopseudomonas</taxon>
    </lineage>
</organism>
<protein>
    <recommendedName>
        <fullName evidence="1">Small ribosomal subunit protein uS2</fullName>
    </recommendedName>
    <alternativeName>
        <fullName evidence="2">30S ribosomal protein S2</fullName>
    </alternativeName>
    <alternativeName>
        <fullName>RRP-S2</fullName>
    </alternativeName>
</protein>
<evidence type="ECO:0000255" key="1">
    <source>
        <dbReference type="HAMAP-Rule" id="MF_00291"/>
    </source>
</evidence>
<evidence type="ECO:0000305" key="2"/>
<comment type="similarity">
    <text evidence="1">Belongs to the universal ribosomal protein uS2 family.</text>
</comment>
<keyword id="KW-0903">Direct protein sequencing</keyword>
<keyword id="KW-0687">Ribonucleoprotein</keyword>
<keyword id="KW-0689">Ribosomal protein</keyword>